<feature type="chain" id="PRO_0000413321" description="Glutamyl-tRNA(Gln) amidotransferase subunit C, chloroplastic/mitochondrial">
    <location>
        <begin position="1"/>
        <end position="141"/>
    </location>
</feature>
<evidence type="ECO:0000255" key="1">
    <source>
        <dbReference type="HAMAP-Rule" id="MF_03149"/>
    </source>
</evidence>
<organism>
    <name type="scientific">Populus trichocarpa</name>
    <name type="common">Western balsam poplar</name>
    <name type="synonym">Populus balsamifera subsp. trichocarpa</name>
    <dbReference type="NCBI Taxonomy" id="3694"/>
    <lineage>
        <taxon>Eukaryota</taxon>
        <taxon>Viridiplantae</taxon>
        <taxon>Streptophyta</taxon>
        <taxon>Embryophyta</taxon>
        <taxon>Tracheophyta</taxon>
        <taxon>Spermatophyta</taxon>
        <taxon>Magnoliopsida</taxon>
        <taxon>eudicotyledons</taxon>
        <taxon>Gunneridae</taxon>
        <taxon>Pentapetalae</taxon>
        <taxon>rosids</taxon>
        <taxon>fabids</taxon>
        <taxon>Malpighiales</taxon>
        <taxon>Salicaceae</taxon>
        <taxon>Saliceae</taxon>
        <taxon>Populus</taxon>
    </lineage>
</organism>
<accession>B9INH0</accession>
<reference key="1">
    <citation type="journal article" date="2006" name="Science">
        <title>The genome of black cottonwood, Populus trichocarpa (Torr. &amp; Gray).</title>
        <authorList>
            <person name="Tuskan G.A."/>
            <person name="Difazio S."/>
            <person name="Jansson S."/>
            <person name="Bohlmann J."/>
            <person name="Grigoriev I."/>
            <person name="Hellsten U."/>
            <person name="Putnam N."/>
            <person name="Ralph S."/>
            <person name="Rombauts S."/>
            <person name="Salamov A."/>
            <person name="Schein J."/>
            <person name="Sterck L."/>
            <person name="Aerts A."/>
            <person name="Bhalerao R.R."/>
            <person name="Bhalerao R.P."/>
            <person name="Blaudez D."/>
            <person name="Boerjan W."/>
            <person name="Brun A."/>
            <person name="Brunner A."/>
            <person name="Busov V."/>
            <person name="Campbell M."/>
            <person name="Carlson J."/>
            <person name="Chalot M."/>
            <person name="Chapman J."/>
            <person name="Chen G.-L."/>
            <person name="Cooper D."/>
            <person name="Coutinho P.M."/>
            <person name="Couturier J."/>
            <person name="Covert S."/>
            <person name="Cronk Q."/>
            <person name="Cunningham R."/>
            <person name="Davis J."/>
            <person name="Degroeve S."/>
            <person name="Dejardin A."/>
            <person name="dePamphilis C.W."/>
            <person name="Detter J."/>
            <person name="Dirks B."/>
            <person name="Dubchak I."/>
            <person name="Duplessis S."/>
            <person name="Ehlting J."/>
            <person name="Ellis B."/>
            <person name="Gendler K."/>
            <person name="Goodstein D."/>
            <person name="Gribskov M."/>
            <person name="Grimwood J."/>
            <person name="Groover A."/>
            <person name="Gunter L."/>
            <person name="Hamberger B."/>
            <person name="Heinze B."/>
            <person name="Helariutta Y."/>
            <person name="Henrissat B."/>
            <person name="Holligan D."/>
            <person name="Holt R."/>
            <person name="Huang W."/>
            <person name="Islam-Faridi N."/>
            <person name="Jones S."/>
            <person name="Jones-Rhoades M."/>
            <person name="Jorgensen R."/>
            <person name="Joshi C."/>
            <person name="Kangasjaervi J."/>
            <person name="Karlsson J."/>
            <person name="Kelleher C."/>
            <person name="Kirkpatrick R."/>
            <person name="Kirst M."/>
            <person name="Kohler A."/>
            <person name="Kalluri U."/>
            <person name="Larimer F."/>
            <person name="Leebens-Mack J."/>
            <person name="Leple J.-C."/>
            <person name="Locascio P."/>
            <person name="Lou Y."/>
            <person name="Lucas S."/>
            <person name="Martin F."/>
            <person name="Montanini B."/>
            <person name="Napoli C."/>
            <person name="Nelson D.R."/>
            <person name="Nelson C."/>
            <person name="Nieminen K."/>
            <person name="Nilsson O."/>
            <person name="Pereda V."/>
            <person name="Peter G."/>
            <person name="Philippe R."/>
            <person name="Pilate G."/>
            <person name="Poliakov A."/>
            <person name="Razumovskaya J."/>
            <person name="Richardson P."/>
            <person name="Rinaldi C."/>
            <person name="Ritland K."/>
            <person name="Rouze P."/>
            <person name="Ryaboy D."/>
            <person name="Schmutz J."/>
            <person name="Schrader J."/>
            <person name="Segerman B."/>
            <person name="Shin H."/>
            <person name="Siddiqui A."/>
            <person name="Sterky F."/>
            <person name="Terry A."/>
            <person name="Tsai C.-J."/>
            <person name="Uberbacher E."/>
            <person name="Unneberg P."/>
            <person name="Vahala J."/>
            <person name="Wall K."/>
            <person name="Wessler S."/>
            <person name="Yang G."/>
            <person name="Yin T."/>
            <person name="Douglas C."/>
            <person name="Marra M."/>
            <person name="Sandberg G."/>
            <person name="Van de Peer Y."/>
            <person name="Rokhsar D.S."/>
        </authorList>
    </citation>
    <scope>NUCLEOTIDE SEQUENCE [LARGE SCALE GENOMIC DNA]</scope>
    <source>
        <strain>cv. Nisqually</strain>
    </source>
</reference>
<reference key="2">
    <citation type="submission" date="2008-12" db="EMBL/GenBank/DDBJ databases">
        <authorList>
            <consortium name="US DOE Joint Genome Institute (JGI-PGF)"/>
            <person name="Grigoriev I.V."/>
            <person name="Terry A."/>
            <person name="Salamov A.A."/>
            <person name="Otillar R."/>
            <person name="Lou Y."/>
            <person name="Lucas S."/>
            <person name="Hammon N."/>
            <person name="Glavina del Rio T."/>
            <person name="Detter J."/>
            <person name="Kalin E."/>
            <person name="Tice H."/>
            <person name="Pitluck S."/>
            <person name="Chapman J."/>
            <person name="Putnam N.H."/>
            <person name="Brunner A."/>
            <person name="Busov V."/>
            <person name="Campbell M."/>
            <person name="Chalot M."/>
            <person name="Covert S."/>
            <person name="Davis J."/>
            <person name="DiFazio S."/>
            <person name="Gribskov M."/>
            <person name="Gunter L."/>
            <person name="Hamberger B."/>
            <person name="Jansson S."/>
            <person name="Joshi C."/>
            <person name="Larimer F."/>
            <person name="Martin F."/>
            <person name="Napoli C."/>
            <person name="Nelson D."/>
            <person name="Ralph S."/>
            <person name="Rombauts S."/>
            <person name="Rouze P."/>
            <person name="Schrader J."/>
            <person name="Tsai C."/>
            <person name="Vahala J."/>
            <person name="Tuskan G."/>
            <person name="Rokhsar D."/>
        </authorList>
    </citation>
    <scope>GENOME REANNOTATION</scope>
    <source>
        <strain>cv. Nisqually</strain>
    </source>
</reference>
<protein>
    <recommendedName>
        <fullName evidence="1">Glutamyl-tRNA(Gln) amidotransferase subunit C, chloroplastic/mitochondrial</fullName>
        <shortName evidence="1">Glu-AdT subunit C</shortName>
        <ecNumber evidence="1">6.3.5.-</ecNumber>
    </recommendedName>
</protein>
<keyword id="KW-0067">ATP-binding</keyword>
<keyword id="KW-0150">Chloroplast</keyword>
<keyword id="KW-0436">Ligase</keyword>
<keyword id="KW-0496">Mitochondrion</keyword>
<keyword id="KW-0547">Nucleotide-binding</keyword>
<keyword id="KW-0934">Plastid</keyword>
<keyword id="KW-0648">Protein biosynthesis</keyword>
<keyword id="KW-1185">Reference proteome</keyword>
<gene>
    <name evidence="1" type="primary">GATC</name>
    <name type="ORF">POPTRDRAFT_577906</name>
</gene>
<name>GATC_POPTR</name>
<proteinExistence type="inferred from homology"/>
<sequence>MGSRAVLLLKGPSPPKHSILFLLNHKKISPAPSIRRFTTKATANGSSLEPPDVARLAETARISLTPQQVEEFGPKIRQVIDWHALLSVDLDSVEPSIRADTEGDNLRHDNPETFENREAIIAAVPNYEDPYVKVPKVLNKE</sequence>
<comment type="function">
    <text evidence="1">Allows the formation of correctly charged Gln-tRNA(Gln) through the transamidation of misacylated Glu-tRNA(Gln) in chloroplasts and mitochondria. The reaction takes place in the presence of glutamine and ATP through an activated gamma-phospho-Glu-tRNA(Gln).</text>
</comment>
<comment type="catalytic activity">
    <reaction evidence="1">
        <text>L-glutamyl-tRNA(Gln) + L-glutamine + ATP + H2O = L-glutaminyl-tRNA(Gln) + L-glutamate + ADP + phosphate + H(+)</text>
        <dbReference type="Rhea" id="RHEA:17521"/>
        <dbReference type="Rhea" id="RHEA-COMP:9681"/>
        <dbReference type="Rhea" id="RHEA-COMP:9684"/>
        <dbReference type="ChEBI" id="CHEBI:15377"/>
        <dbReference type="ChEBI" id="CHEBI:15378"/>
        <dbReference type="ChEBI" id="CHEBI:29985"/>
        <dbReference type="ChEBI" id="CHEBI:30616"/>
        <dbReference type="ChEBI" id="CHEBI:43474"/>
        <dbReference type="ChEBI" id="CHEBI:58359"/>
        <dbReference type="ChEBI" id="CHEBI:78520"/>
        <dbReference type="ChEBI" id="CHEBI:78521"/>
        <dbReference type="ChEBI" id="CHEBI:456216"/>
    </reaction>
</comment>
<comment type="subunit">
    <text evidence="1">Subunit of the heterotrimeric GatCAB amidotransferase (AdT) complex, composed of A, B and C subunits.</text>
</comment>
<comment type="subcellular location">
    <subcellularLocation>
        <location evidence="1">Mitochondrion</location>
    </subcellularLocation>
    <subcellularLocation>
        <location evidence="1">Plastid</location>
        <location evidence="1">Chloroplast</location>
    </subcellularLocation>
</comment>
<comment type="miscellaneous">
    <text evidence="1">This protein may be expected to contain an N-terminal transit peptide but none has been predicted.</text>
</comment>
<comment type="similarity">
    <text evidence="1">Belongs to the GatC family.</text>
</comment>
<dbReference type="EC" id="6.3.5.-" evidence="1"/>
<dbReference type="EMBL" id="CM009307">
    <property type="protein sequence ID" value="EEF03314.1"/>
    <property type="molecule type" value="Genomic_DNA"/>
</dbReference>
<dbReference type="SMR" id="B9INH0"/>
<dbReference type="FunCoup" id="B9INH0">
    <property type="interactions" value="789"/>
</dbReference>
<dbReference type="STRING" id="3694.B9INH0"/>
<dbReference type="InParanoid" id="B9INH0"/>
<dbReference type="Proteomes" id="UP000006729">
    <property type="component" value="Chromosome 18"/>
</dbReference>
<dbReference type="ExpressionAtlas" id="B9INH0">
    <property type="expression patterns" value="differential"/>
</dbReference>
<dbReference type="GO" id="GO:0009507">
    <property type="term" value="C:chloroplast"/>
    <property type="evidence" value="ECO:0007669"/>
    <property type="project" value="UniProtKB-SubCell"/>
</dbReference>
<dbReference type="GO" id="GO:0030956">
    <property type="term" value="C:glutamyl-tRNA(Gln) amidotransferase complex"/>
    <property type="evidence" value="ECO:0000318"/>
    <property type="project" value="GO_Central"/>
</dbReference>
<dbReference type="GO" id="GO:0005739">
    <property type="term" value="C:mitochondrion"/>
    <property type="evidence" value="ECO:0000318"/>
    <property type="project" value="GO_Central"/>
</dbReference>
<dbReference type="GO" id="GO:0005524">
    <property type="term" value="F:ATP binding"/>
    <property type="evidence" value="ECO:0007669"/>
    <property type="project" value="UniProtKB-KW"/>
</dbReference>
<dbReference type="GO" id="GO:0050567">
    <property type="term" value="F:glutaminyl-tRNA synthase (glutamine-hydrolyzing) activity"/>
    <property type="evidence" value="ECO:0007669"/>
    <property type="project" value="UniProtKB-UniRule"/>
</dbReference>
<dbReference type="GO" id="GO:0070681">
    <property type="term" value="P:glutaminyl-tRNAGln biosynthesis via transamidation"/>
    <property type="evidence" value="ECO:0000318"/>
    <property type="project" value="GO_Central"/>
</dbReference>
<dbReference type="GO" id="GO:0032543">
    <property type="term" value="P:mitochondrial translation"/>
    <property type="evidence" value="ECO:0000318"/>
    <property type="project" value="GO_Central"/>
</dbReference>
<dbReference type="GO" id="GO:0006450">
    <property type="term" value="P:regulation of translational fidelity"/>
    <property type="evidence" value="ECO:0007669"/>
    <property type="project" value="InterPro"/>
</dbReference>
<dbReference type="HAMAP" id="MF_00122">
    <property type="entry name" value="GatC"/>
    <property type="match status" value="1"/>
</dbReference>
<dbReference type="InterPro" id="IPR036113">
    <property type="entry name" value="Asp/Glu-ADT_sf_sub_c"/>
</dbReference>
<dbReference type="InterPro" id="IPR003837">
    <property type="entry name" value="GatC"/>
</dbReference>
<dbReference type="NCBIfam" id="TIGR00135">
    <property type="entry name" value="gatC"/>
    <property type="match status" value="1"/>
</dbReference>
<dbReference type="PANTHER" id="PTHR15004">
    <property type="entry name" value="GLUTAMYL-TRNA(GLN) AMIDOTRANSFERASE SUBUNIT C, MITOCHONDRIAL"/>
    <property type="match status" value="1"/>
</dbReference>
<dbReference type="PANTHER" id="PTHR15004:SF0">
    <property type="entry name" value="GLUTAMYL-TRNA(GLN) AMIDOTRANSFERASE SUBUNIT C, MITOCHONDRIAL"/>
    <property type="match status" value="1"/>
</dbReference>
<dbReference type="Pfam" id="PF02686">
    <property type="entry name" value="GatC"/>
    <property type="match status" value="1"/>
</dbReference>
<dbReference type="SUPFAM" id="SSF141000">
    <property type="entry name" value="Glu-tRNAGln amidotransferase C subunit"/>
    <property type="match status" value="1"/>
</dbReference>